<reference key="1">
    <citation type="journal article" date="2004" name="Science">
        <title>Illuminating the evolutionary history of chlamydiae.</title>
        <authorList>
            <person name="Horn M."/>
            <person name="Collingro A."/>
            <person name="Schmitz-Esser S."/>
            <person name="Beier C.L."/>
            <person name="Purkhold U."/>
            <person name="Fartmann B."/>
            <person name="Brandt P."/>
            <person name="Nyakatura G.J."/>
            <person name="Droege M."/>
            <person name="Frishman D."/>
            <person name="Rattei T."/>
            <person name="Mewes H.-W."/>
            <person name="Wagner M."/>
        </authorList>
    </citation>
    <scope>NUCLEOTIDE SEQUENCE [LARGE SCALE GENOMIC DNA]</scope>
    <source>
        <strain>UWE25</strain>
    </source>
</reference>
<gene>
    <name evidence="1" type="primary">atpD</name>
    <name type="ordered locus">pc1668</name>
</gene>
<name>ATPB_PARUW</name>
<keyword id="KW-0066">ATP synthesis</keyword>
<keyword id="KW-0067">ATP-binding</keyword>
<keyword id="KW-1003">Cell membrane</keyword>
<keyword id="KW-0139">CF(1)</keyword>
<keyword id="KW-0375">Hydrogen ion transport</keyword>
<keyword id="KW-0406">Ion transport</keyword>
<keyword id="KW-0472">Membrane</keyword>
<keyword id="KW-0547">Nucleotide-binding</keyword>
<keyword id="KW-1185">Reference proteome</keyword>
<keyword id="KW-1278">Translocase</keyword>
<keyword id="KW-0813">Transport</keyword>
<proteinExistence type="inferred from homology"/>
<feature type="chain" id="PRO_0000254323" description="ATP synthase subunit beta">
    <location>
        <begin position="1"/>
        <end position="464"/>
    </location>
</feature>
<feature type="binding site" evidence="1">
    <location>
        <begin position="152"/>
        <end position="159"/>
    </location>
    <ligand>
        <name>ATP</name>
        <dbReference type="ChEBI" id="CHEBI:30616"/>
    </ligand>
</feature>
<evidence type="ECO:0000255" key="1">
    <source>
        <dbReference type="HAMAP-Rule" id="MF_01347"/>
    </source>
</evidence>
<evidence type="ECO:0000305" key="2"/>
<comment type="function">
    <text evidence="1">Produces ATP from ADP in the presence of a proton gradient across the membrane. The catalytic sites are hosted primarily by the beta subunits.</text>
</comment>
<comment type="catalytic activity">
    <reaction evidence="1">
        <text>ATP + H2O + 4 H(+)(in) = ADP + phosphate + 5 H(+)(out)</text>
        <dbReference type="Rhea" id="RHEA:57720"/>
        <dbReference type="ChEBI" id="CHEBI:15377"/>
        <dbReference type="ChEBI" id="CHEBI:15378"/>
        <dbReference type="ChEBI" id="CHEBI:30616"/>
        <dbReference type="ChEBI" id="CHEBI:43474"/>
        <dbReference type="ChEBI" id="CHEBI:456216"/>
        <dbReference type="EC" id="7.1.2.2"/>
    </reaction>
</comment>
<comment type="subunit">
    <text evidence="1">F-type ATPases have 2 components, CF(1) - the catalytic core - and CF(0) - the membrane proton channel. CF(1) has five subunits: alpha(3), beta(3), gamma(1), delta(1), epsilon(1). CF(0) has three main subunits: a(1), b(2) and c(9-12). The alpha and beta chains form an alternating ring which encloses part of the gamma chain. CF(1) is attached to CF(0) by a central stalk formed by the gamma and epsilon chains, while a peripheral stalk is formed by the delta and b chains.</text>
</comment>
<comment type="subcellular location">
    <subcellularLocation>
        <location evidence="1">Cell membrane</location>
        <topology evidence="1">Peripheral membrane protein</topology>
    </subcellularLocation>
</comment>
<comment type="similarity">
    <text evidence="1">Belongs to the ATPase alpha/beta chains family.</text>
</comment>
<comment type="sequence caution" evidence="2">
    <conflict type="erroneous initiation">
        <sequence resource="EMBL-CDS" id="CAF24392"/>
    </conflict>
</comment>
<organism>
    <name type="scientific">Protochlamydia amoebophila (strain UWE25)</name>
    <dbReference type="NCBI Taxonomy" id="264201"/>
    <lineage>
        <taxon>Bacteria</taxon>
        <taxon>Pseudomonadati</taxon>
        <taxon>Chlamydiota</taxon>
        <taxon>Chlamydiia</taxon>
        <taxon>Parachlamydiales</taxon>
        <taxon>Parachlamydiaceae</taxon>
        <taxon>Candidatus Protochlamydia</taxon>
    </lineage>
</organism>
<protein>
    <recommendedName>
        <fullName evidence="1">ATP synthase subunit beta</fullName>
        <ecNumber evidence="1">7.1.2.2</ecNumber>
    </recommendedName>
    <alternativeName>
        <fullName evidence="1">ATP synthase F1 sector subunit beta</fullName>
    </alternativeName>
    <alternativeName>
        <fullName evidence="1">F-ATPase subunit beta</fullName>
    </alternativeName>
</protein>
<sequence length="464" mass="50771">MAVGKVKQIVGPTLDIEFPPGQLPNILNAIKIIDPKDQRELIAEVAMHLGDNQVRCIALSSTDGLVREAQAVDTEAPISIPVGSPTLGRLLNVLGQPIDEMGAIENAEISPIHKASPTFEEQDTQGVIFETGIKVIDLLCPYTKGGKVGLFGGAGVGKSVIVMELIHNIATHHGGYSVFCGIGERTREGNDLWLEMKESGILSKTSLVFGQMNEPPGARMRVGLTGLTMAEHFRDQEHQNVLLFIDNIFRFVQAGSEVSALLGRMPSAVGYQPTLASEIGSLQERITSTKHGSITSVQAIYVPADDYTDPAPASIFPHLDAATTLSRQIAELGIYPAVDPLNSSSRILDPHVLGEEHYQVARQVQKVLQRYKDLQDIIAILGIDELSEEDQLTVSRARRIQKFLSQPFFVAETFTGKKGRFVKLPDTIKGFKMIVEGEMDNIPEQAFYMVGTIEEVFEKAEQMK</sequence>
<dbReference type="EC" id="7.1.2.2" evidence="1"/>
<dbReference type="EMBL" id="BX908798">
    <property type="protein sequence ID" value="CAF24392.1"/>
    <property type="status" value="ALT_INIT"/>
    <property type="molecule type" value="Genomic_DNA"/>
</dbReference>
<dbReference type="RefSeq" id="WP_044045207.1">
    <property type="nucleotide sequence ID" value="NC_005861.2"/>
</dbReference>
<dbReference type="SMR" id="Q6MAK7"/>
<dbReference type="STRING" id="264201.pc1668"/>
<dbReference type="eggNOG" id="COG0055">
    <property type="taxonomic scope" value="Bacteria"/>
</dbReference>
<dbReference type="HOGENOM" id="CLU_022398_0_2_0"/>
<dbReference type="OrthoDB" id="9803053at2"/>
<dbReference type="Proteomes" id="UP000000529">
    <property type="component" value="Chromosome"/>
</dbReference>
<dbReference type="GO" id="GO:0005886">
    <property type="term" value="C:plasma membrane"/>
    <property type="evidence" value="ECO:0007669"/>
    <property type="project" value="UniProtKB-SubCell"/>
</dbReference>
<dbReference type="GO" id="GO:0045259">
    <property type="term" value="C:proton-transporting ATP synthase complex"/>
    <property type="evidence" value="ECO:0007669"/>
    <property type="project" value="UniProtKB-KW"/>
</dbReference>
<dbReference type="GO" id="GO:0005524">
    <property type="term" value="F:ATP binding"/>
    <property type="evidence" value="ECO:0007669"/>
    <property type="project" value="UniProtKB-UniRule"/>
</dbReference>
<dbReference type="GO" id="GO:0016887">
    <property type="term" value="F:ATP hydrolysis activity"/>
    <property type="evidence" value="ECO:0007669"/>
    <property type="project" value="InterPro"/>
</dbReference>
<dbReference type="GO" id="GO:0046933">
    <property type="term" value="F:proton-transporting ATP synthase activity, rotational mechanism"/>
    <property type="evidence" value="ECO:0007669"/>
    <property type="project" value="UniProtKB-UniRule"/>
</dbReference>
<dbReference type="CDD" id="cd18110">
    <property type="entry name" value="ATP-synt_F1_beta_C"/>
    <property type="match status" value="1"/>
</dbReference>
<dbReference type="CDD" id="cd18115">
    <property type="entry name" value="ATP-synt_F1_beta_N"/>
    <property type="match status" value="1"/>
</dbReference>
<dbReference type="CDD" id="cd01133">
    <property type="entry name" value="F1-ATPase_beta_CD"/>
    <property type="match status" value="1"/>
</dbReference>
<dbReference type="FunFam" id="1.10.1140.10:FF:000001">
    <property type="entry name" value="ATP synthase subunit beta"/>
    <property type="match status" value="1"/>
</dbReference>
<dbReference type="FunFam" id="3.40.50.300:FF:000004">
    <property type="entry name" value="ATP synthase subunit beta"/>
    <property type="match status" value="1"/>
</dbReference>
<dbReference type="Gene3D" id="2.40.10.170">
    <property type="match status" value="1"/>
</dbReference>
<dbReference type="Gene3D" id="1.10.1140.10">
    <property type="entry name" value="Bovine Mitochondrial F1-atpase, Atp Synthase Beta Chain, Chain D, domain 3"/>
    <property type="match status" value="1"/>
</dbReference>
<dbReference type="Gene3D" id="3.40.50.300">
    <property type="entry name" value="P-loop containing nucleotide triphosphate hydrolases"/>
    <property type="match status" value="1"/>
</dbReference>
<dbReference type="HAMAP" id="MF_01347">
    <property type="entry name" value="ATP_synth_beta_bact"/>
    <property type="match status" value="1"/>
</dbReference>
<dbReference type="InterPro" id="IPR003593">
    <property type="entry name" value="AAA+_ATPase"/>
</dbReference>
<dbReference type="InterPro" id="IPR055190">
    <property type="entry name" value="ATP-synt_VA_C"/>
</dbReference>
<dbReference type="InterPro" id="IPR005722">
    <property type="entry name" value="ATP_synth_F1_bsu"/>
</dbReference>
<dbReference type="InterPro" id="IPR020003">
    <property type="entry name" value="ATPase_a/bsu_AS"/>
</dbReference>
<dbReference type="InterPro" id="IPR050053">
    <property type="entry name" value="ATPase_alpha/beta_chains"/>
</dbReference>
<dbReference type="InterPro" id="IPR004100">
    <property type="entry name" value="ATPase_F1/V1/A1_a/bsu_N"/>
</dbReference>
<dbReference type="InterPro" id="IPR036121">
    <property type="entry name" value="ATPase_F1/V1/A1_a/bsu_N_sf"/>
</dbReference>
<dbReference type="InterPro" id="IPR000194">
    <property type="entry name" value="ATPase_F1/V1/A1_a/bsu_nucl-bd"/>
</dbReference>
<dbReference type="InterPro" id="IPR024034">
    <property type="entry name" value="ATPase_F1/V1_b/a_C"/>
</dbReference>
<dbReference type="InterPro" id="IPR027417">
    <property type="entry name" value="P-loop_NTPase"/>
</dbReference>
<dbReference type="NCBIfam" id="TIGR01039">
    <property type="entry name" value="atpD"/>
    <property type="match status" value="1"/>
</dbReference>
<dbReference type="PANTHER" id="PTHR15184">
    <property type="entry name" value="ATP SYNTHASE"/>
    <property type="match status" value="1"/>
</dbReference>
<dbReference type="PANTHER" id="PTHR15184:SF71">
    <property type="entry name" value="ATP SYNTHASE SUBUNIT BETA, MITOCHONDRIAL"/>
    <property type="match status" value="1"/>
</dbReference>
<dbReference type="Pfam" id="PF00006">
    <property type="entry name" value="ATP-synt_ab"/>
    <property type="match status" value="1"/>
</dbReference>
<dbReference type="Pfam" id="PF02874">
    <property type="entry name" value="ATP-synt_ab_N"/>
    <property type="match status" value="1"/>
</dbReference>
<dbReference type="Pfam" id="PF22919">
    <property type="entry name" value="ATP-synt_VA_C"/>
    <property type="match status" value="1"/>
</dbReference>
<dbReference type="SMART" id="SM00382">
    <property type="entry name" value="AAA"/>
    <property type="match status" value="1"/>
</dbReference>
<dbReference type="SUPFAM" id="SSF47917">
    <property type="entry name" value="C-terminal domain of alpha and beta subunits of F1 ATP synthase"/>
    <property type="match status" value="1"/>
</dbReference>
<dbReference type="SUPFAM" id="SSF50615">
    <property type="entry name" value="N-terminal domain of alpha and beta subunits of F1 ATP synthase"/>
    <property type="match status" value="1"/>
</dbReference>
<dbReference type="SUPFAM" id="SSF52540">
    <property type="entry name" value="P-loop containing nucleoside triphosphate hydrolases"/>
    <property type="match status" value="1"/>
</dbReference>
<dbReference type="PROSITE" id="PS00152">
    <property type="entry name" value="ATPASE_ALPHA_BETA"/>
    <property type="match status" value="1"/>
</dbReference>
<accession>Q6MAK7</accession>